<protein>
    <recommendedName>
        <fullName evidence="1">DNA integrity scanning protein DisA</fullName>
    </recommendedName>
    <alternativeName>
        <fullName evidence="1">Cyclic di-AMP synthase</fullName>
        <shortName evidence="1">c-di-AMP synthase</shortName>
    </alternativeName>
    <alternativeName>
        <fullName evidence="1">Diadenylate cyclase</fullName>
        <ecNumber evidence="1">2.7.7.85</ecNumber>
    </alternativeName>
</protein>
<reference key="1">
    <citation type="journal article" date="2007" name="Genome Res.">
        <title>Genome characteristics of facultatively symbiotic Frankia sp. strains reflect host range and host plant biogeography.</title>
        <authorList>
            <person name="Normand P."/>
            <person name="Lapierre P."/>
            <person name="Tisa L.S."/>
            <person name="Gogarten J.P."/>
            <person name="Alloisio N."/>
            <person name="Bagnarol E."/>
            <person name="Bassi C.A."/>
            <person name="Berry A.M."/>
            <person name="Bickhart D.M."/>
            <person name="Choisne N."/>
            <person name="Couloux A."/>
            <person name="Cournoyer B."/>
            <person name="Cruveiller S."/>
            <person name="Daubin V."/>
            <person name="Demange N."/>
            <person name="Francino M.P."/>
            <person name="Goltsman E."/>
            <person name="Huang Y."/>
            <person name="Kopp O.R."/>
            <person name="Labarre L."/>
            <person name="Lapidus A."/>
            <person name="Lavire C."/>
            <person name="Marechal J."/>
            <person name="Martinez M."/>
            <person name="Mastronunzio J.E."/>
            <person name="Mullin B.C."/>
            <person name="Niemann J."/>
            <person name="Pujic P."/>
            <person name="Rawnsley T."/>
            <person name="Rouy Z."/>
            <person name="Schenowitz C."/>
            <person name="Sellstedt A."/>
            <person name="Tavares F."/>
            <person name="Tomkins J.P."/>
            <person name="Vallenet D."/>
            <person name="Valverde C."/>
            <person name="Wall L.G."/>
            <person name="Wang Y."/>
            <person name="Medigue C."/>
            <person name="Benson D.R."/>
        </authorList>
    </citation>
    <scope>NUCLEOTIDE SEQUENCE [LARGE SCALE GENOMIC DNA]</scope>
    <source>
        <strain>EAN1pec</strain>
    </source>
</reference>
<sequence length="359" mass="38851">MAGPPGDDIFRATLAAVAPGTPFRDGLERILRGHTGALIVLGHDKVVEGLCTGGFELDVEFSATRLRELAKMDGAIVLSSDLARIVRAAVHLVPDPTVPTEESGTRHRTAERVAKQTGFPVISVSQSMHIIALYVAGRRYVLDGAAAILSRANQALATLERYKLRLDEVAGTLSALEIEDLVTVRDAISVSQRLEMVRRIADEIESYVVELGTDGRLLSLQLEELMAGVETERELTVRDYLPVGSRAGNAAQVLAELSAMSPTDLLDLTVIARVIGFSGGADILDRQISPRGYRMLAKVPRLPRMVVDRLVDHFSTLQKLLAAGVDDLQAVDGVGETRARAVREGLSRLAESSILERYV</sequence>
<evidence type="ECO:0000255" key="1">
    <source>
        <dbReference type="HAMAP-Rule" id="MF_01438"/>
    </source>
</evidence>
<evidence type="ECO:0000255" key="2">
    <source>
        <dbReference type="PROSITE-ProRule" id="PRU01130"/>
    </source>
</evidence>
<comment type="function">
    <text evidence="1">Participates in a DNA-damage check-point that is active prior to asymmetric division when DNA is damaged. DisA forms globular foci that rapidly scan along the chromosomes during sporulation, searching for lesions. When a lesion is present, DisA pauses at the lesion site. This triggers a cellular response that culminates in a temporary block in sporulation initiation.</text>
</comment>
<comment type="function">
    <text evidence="1">Also has diadenylate cyclase activity, catalyzing the condensation of 2 ATP molecules into cyclic di-AMP (c-di-AMP). c-di-AMP acts as a signaling molecule that couples DNA integrity with progression of sporulation. The rise in c-di-AMP level generated by DisA while scanning the chromosome, operates as a positive signal that advances sporulation; upon encountering a lesion, the DisA focus arrests at the damaged site and halts c-di-AMP synthesis.</text>
</comment>
<comment type="catalytic activity">
    <reaction evidence="1">
        <text>2 ATP = 3',3'-c-di-AMP + 2 diphosphate</text>
        <dbReference type="Rhea" id="RHEA:35655"/>
        <dbReference type="ChEBI" id="CHEBI:30616"/>
        <dbReference type="ChEBI" id="CHEBI:33019"/>
        <dbReference type="ChEBI" id="CHEBI:71500"/>
        <dbReference type="EC" id="2.7.7.85"/>
    </reaction>
</comment>
<comment type="cofactor">
    <cofactor evidence="1">
        <name>Mg(2+)</name>
        <dbReference type="ChEBI" id="CHEBI:18420"/>
    </cofactor>
</comment>
<comment type="subunit">
    <text evidence="1">Homooctamer.</text>
</comment>
<comment type="similarity">
    <text evidence="1">Belongs to the DisA family.</text>
</comment>
<organism>
    <name type="scientific">Parafrankia sp. (strain EAN1pec)</name>
    <dbReference type="NCBI Taxonomy" id="298653"/>
    <lineage>
        <taxon>Bacteria</taxon>
        <taxon>Bacillati</taxon>
        <taxon>Actinomycetota</taxon>
        <taxon>Actinomycetes</taxon>
        <taxon>Frankiales</taxon>
        <taxon>Frankiaceae</taxon>
        <taxon>Parafrankia</taxon>
    </lineage>
</organism>
<dbReference type="EC" id="2.7.7.85" evidence="1"/>
<dbReference type="EMBL" id="CP000820">
    <property type="protein sequence ID" value="ABW09824.1"/>
    <property type="molecule type" value="Genomic_DNA"/>
</dbReference>
<dbReference type="RefSeq" id="WP_012157801.1">
    <property type="nucleotide sequence ID" value="NC_009921.1"/>
</dbReference>
<dbReference type="SMR" id="A8LF79"/>
<dbReference type="STRING" id="298653.Franean1_0358"/>
<dbReference type="KEGG" id="fre:Franean1_0358"/>
<dbReference type="eggNOG" id="COG1623">
    <property type="taxonomic scope" value="Bacteria"/>
</dbReference>
<dbReference type="HOGENOM" id="CLU_787128_0_0_11"/>
<dbReference type="GO" id="GO:0004016">
    <property type="term" value="F:adenylate cyclase activity"/>
    <property type="evidence" value="ECO:0007669"/>
    <property type="project" value="TreeGrafter"/>
</dbReference>
<dbReference type="GO" id="GO:0005524">
    <property type="term" value="F:ATP binding"/>
    <property type="evidence" value="ECO:0007669"/>
    <property type="project" value="UniProtKB-UniRule"/>
</dbReference>
<dbReference type="GO" id="GO:0106408">
    <property type="term" value="F:diadenylate cyclase activity"/>
    <property type="evidence" value="ECO:0007669"/>
    <property type="project" value="UniProtKB-EC"/>
</dbReference>
<dbReference type="GO" id="GO:0003677">
    <property type="term" value="F:DNA binding"/>
    <property type="evidence" value="ECO:0007669"/>
    <property type="project" value="UniProtKB-UniRule"/>
</dbReference>
<dbReference type="GO" id="GO:0006281">
    <property type="term" value="P:DNA repair"/>
    <property type="evidence" value="ECO:0007669"/>
    <property type="project" value="UniProtKB-UniRule"/>
</dbReference>
<dbReference type="FunFam" id="1.10.150.20:FF:000016">
    <property type="entry name" value="DNA integrity scanning protein DisA"/>
    <property type="match status" value="1"/>
</dbReference>
<dbReference type="FunFam" id="1.20.1260.110:FF:000002">
    <property type="entry name" value="DNA integrity scanning protein DisA"/>
    <property type="match status" value="1"/>
</dbReference>
<dbReference type="FunFam" id="3.40.1700.10:FF:000001">
    <property type="entry name" value="DNA integrity scanning protein DisA"/>
    <property type="match status" value="1"/>
</dbReference>
<dbReference type="Gene3D" id="1.10.150.20">
    <property type="entry name" value="5' to 3' exonuclease, C-terminal subdomain"/>
    <property type="match status" value="1"/>
</dbReference>
<dbReference type="Gene3D" id="1.20.1260.110">
    <property type="entry name" value="DNA integrity scanning linker region"/>
    <property type="match status" value="1"/>
</dbReference>
<dbReference type="Gene3D" id="3.40.1700.10">
    <property type="entry name" value="DNA integrity scanning protein, DisA, N-terminal domain"/>
    <property type="match status" value="1"/>
</dbReference>
<dbReference type="HAMAP" id="MF_01438">
    <property type="entry name" value="DisA"/>
    <property type="match status" value="1"/>
</dbReference>
<dbReference type="InterPro" id="IPR050338">
    <property type="entry name" value="DisA"/>
</dbReference>
<dbReference type="InterPro" id="IPR038331">
    <property type="entry name" value="DisA_sf"/>
</dbReference>
<dbReference type="InterPro" id="IPR036888">
    <property type="entry name" value="DNA_integrity_DisA_N_sf"/>
</dbReference>
<dbReference type="InterPro" id="IPR018906">
    <property type="entry name" value="DNA_integrity_scan_DisA_link"/>
</dbReference>
<dbReference type="InterPro" id="IPR003390">
    <property type="entry name" value="DNA_integrity_scan_DisA_N"/>
</dbReference>
<dbReference type="InterPro" id="IPR023763">
    <property type="entry name" value="DNA_integrity_scanning_protein"/>
</dbReference>
<dbReference type="InterPro" id="IPR010994">
    <property type="entry name" value="RuvA_2-like"/>
</dbReference>
<dbReference type="NCBIfam" id="NF010009">
    <property type="entry name" value="PRK13482.1"/>
    <property type="match status" value="1"/>
</dbReference>
<dbReference type="PANTHER" id="PTHR34185">
    <property type="entry name" value="DIADENYLATE CYCLASE"/>
    <property type="match status" value="1"/>
</dbReference>
<dbReference type="PANTHER" id="PTHR34185:SF3">
    <property type="entry name" value="DNA INTEGRITY SCANNING PROTEIN DISA"/>
    <property type="match status" value="1"/>
</dbReference>
<dbReference type="Pfam" id="PF02457">
    <property type="entry name" value="DAC"/>
    <property type="match status" value="1"/>
</dbReference>
<dbReference type="Pfam" id="PF10635">
    <property type="entry name" value="DisA-linker"/>
    <property type="match status" value="1"/>
</dbReference>
<dbReference type="SUPFAM" id="SSF47781">
    <property type="entry name" value="RuvA domain 2-like"/>
    <property type="match status" value="1"/>
</dbReference>
<dbReference type="SUPFAM" id="SSF143597">
    <property type="entry name" value="YojJ-like"/>
    <property type="match status" value="1"/>
</dbReference>
<dbReference type="PROSITE" id="PS51794">
    <property type="entry name" value="DAC"/>
    <property type="match status" value="1"/>
</dbReference>
<keyword id="KW-0067">ATP-binding</keyword>
<keyword id="KW-0227">DNA damage</keyword>
<keyword id="KW-0234">DNA repair</keyword>
<keyword id="KW-0238">DNA-binding</keyword>
<keyword id="KW-0460">Magnesium</keyword>
<keyword id="KW-0547">Nucleotide-binding</keyword>
<keyword id="KW-0548">Nucleotidyltransferase</keyword>
<keyword id="KW-0808">Transferase</keyword>
<feature type="chain" id="PRO_1000145863" description="DNA integrity scanning protein DisA">
    <location>
        <begin position="1"/>
        <end position="359"/>
    </location>
</feature>
<feature type="domain" description="DAC" evidence="2">
    <location>
        <begin position="7"/>
        <end position="145"/>
    </location>
</feature>
<feature type="binding site" evidence="1">
    <location>
        <position position="74"/>
    </location>
    <ligand>
        <name>ATP</name>
        <dbReference type="ChEBI" id="CHEBI:30616"/>
    </ligand>
</feature>
<feature type="binding site" evidence="1">
    <location>
        <position position="92"/>
    </location>
    <ligand>
        <name>ATP</name>
        <dbReference type="ChEBI" id="CHEBI:30616"/>
    </ligand>
</feature>
<feature type="binding site" evidence="1">
    <location>
        <begin position="105"/>
        <end position="109"/>
    </location>
    <ligand>
        <name>ATP</name>
        <dbReference type="ChEBI" id="CHEBI:30616"/>
    </ligand>
</feature>
<gene>
    <name evidence="1" type="primary">disA</name>
    <name type="ordered locus">Franean1_0358</name>
</gene>
<accession>A8LF79</accession>
<proteinExistence type="inferred from homology"/>
<name>DISA_PARS2</name>